<evidence type="ECO:0000255" key="1">
    <source>
        <dbReference type="HAMAP-Rule" id="MF_00023"/>
    </source>
</evidence>
<evidence type="ECO:0000256" key="2">
    <source>
        <dbReference type="SAM" id="MobiDB-lite"/>
    </source>
</evidence>
<proteinExistence type="inferred from homology"/>
<name>SSRP_SALAI</name>
<accession>A8M3R4</accession>
<reference key="1">
    <citation type="submission" date="2007-10" db="EMBL/GenBank/DDBJ databases">
        <title>Complete sequence of Salinispora arenicola CNS-205.</title>
        <authorList>
            <consortium name="US DOE Joint Genome Institute"/>
            <person name="Copeland A."/>
            <person name="Lucas S."/>
            <person name="Lapidus A."/>
            <person name="Barry K."/>
            <person name="Glavina del Rio T."/>
            <person name="Dalin E."/>
            <person name="Tice H."/>
            <person name="Pitluck S."/>
            <person name="Foster B."/>
            <person name="Schmutz J."/>
            <person name="Larimer F."/>
            <person name="Land M."/>
            <person name="Hauser L."/>
            <person name="Kyrpides N."/>
            <person name="Ivanova N."/>
            <person name="Jensen P.R."/>
            <person name="Moore B.S."/>
            <person name="Penn K."/>
            <person name="Jenkins C."/>
            <person name="Udwary D."/>
            <person name="Xiang L."/>
            <person name="Gontang E."/>
            <person name="Richardson P."/>
        </authorList>
    </citation>
    <scope>NUCLEOTIDE SEQUENCE [LARGE SCALE GENOMIC DNA]</scope>
    <source>
        <strain>CNS-205</strain>
    </source>
</reference>
<sequence length="159" mass="18057">MPREKGRKVVASNRKARHDYSILDTYEAGMALTGTEVKSLRAGRASLVDAFAQERNGELYLHGMHIPEYVQGTWTNHEPRRTRKLLLNRTEIDRLIGKTRESGLTLVPLQVYFSDGWAKVEIGVAKGKKAYDKRQDLAKRDAQREMARAAGRRSKGMDD</sequence>
<organism>
    <name type="scientific">Salinispora arenicola (strain CNS-205)</name>
    <dbReference type="NCBI Taxonomy" id="391037"/>
    <lineage>
        <taxon>Bacteria</taxon>
        <taxon>Bacillati</taxon>
        <taxon>Actinomycetota</taxon>
        <taxon>Actinomycetes</taxon>
        <taxon>Micromonosporales</taxon>
        <taxon>Micromonosporaceae</taxon>
        <taxon>Salinispora</taxon>
    </lineage>
</organism>
<feature type="chain" id="PRO_1000074367" description="SsrA-binding protein">
    <location>
        <begin position="1"/>
        <end position="159"/>
    </location>
</feature>
<feature type="region of interest" description="Disordered" evidence="2">
    <location>
        <begin position="133"/>
        <end position="159"/>
    </location>
</feature>
<feature type="compositionally biased region" description="Basic and acidic residues" evidence="2">
    <location>
        <begin position="133"/>
        <end position="147"/>
    </location>
</feature>
<feature type="compositionally biased region" description="Basic residues" evidence="2">
    <location>
        <begin position="150"/>
        <end position="159"/>
    </location>
</feature>
<gene>
    <name evidence="1" type="primary">smpB</name>
    <name type="ordered locus">Sare_0920</name>
</gene>
<keyword id="KW-0963">Cytoplasm</keyword>
<keyword id="KW-0694">RNA-binding</keyword>
<protein>
    <recommendedName>
        <fullName evidence="1">SsrA-binding protein</fullName>
    </recommendedName>
    <alternativeName>
        <fullName evidence="1">Small protein B</fullName>
    </alternativeName>
</protein>
<dbReference type="EMBL" id="CP000850">
    <property type="protein sequence ID" value="ABV96837.1"/>
    <property type="molecule type" value="Genomic_DNA"/>
</dbReference>
<dbReference type="SMR" id="A8M3R4"/>
<dbReference type="STRING" id="391037.Sare_0920"/>
<dbReference type="KEGG" id="saq:Sare_0920"/>
<dbReference type="PATRIC" id="fig|391037.6.peg.939"/>
<dbReference type="eggNOG" id="COG0691">
    <property type="taxonomic scope" value="Bacteria"/>
</dbReference>
<dbReference type="HOGENOM" id="CLU_108953_2_1_11"/>
<dbReference type="OrthoDB" id="9805462at2"/>
<dbReference type="GO" id="GO:0005829">
    <property type="term" value="C:cytosol"/>
    <property type="evidence" value="ECO:0007669"/>
    <property type="project" value="TreeGrafter"/>
</dbReference>
<dbReference type="GO" id="GO:0003723">
    <property type="term" value="F:RNA binding"/>
    <property type="evidence" value="ECO:0007669"/>
    <property type="project" value="UniProtKB-UniRule"/>
</dbReference>
<dbReference type="GO" id="GO:0070929">
    <property type="term" value="P:trans-translation"/>
    <property type="evidence" value="ECO:0007669"/>
    <property type="project" value="UniProtKB-UniRule"/>
</dbReference>
<dbReference type="CDD" id="cd09294">
    <property type="entry name" value="SmpB"/>
    <property type="match status" value="1"/>
</dbReference>
<dbReference type="Gene3D" id="2.40.280.10">
    <property type="match status" value="1"/>
</dbReference>
<dbReference type="HAMAP" id="MF_00023">
    <property type="entry name" value="SmpB"/>
    <property type="match status" value="1"/>
</dbReference>
<dbReference type="InterPro" id="IPR023620">
    <property type="entry name" value="SmpB"/>
</dbReference>
<dbReference type="InterPro" id="IPR000037">
    <property type="entry name" value="SsrA-bd_prot"/>
</dbReference>
<dbReference type="InterPro" id="IPR020081">
    <property type="entry name" value="SsrA-bd_prot_CS"/>
</dbReference>
<dbReference type="NCBIfam" id="NF003843">
    <property type="entry name" value="PRK05422.1"/>
    <property type="match status" value="1"/>
</dbReference>
<dbReference type="NCBIfam" id="TIGR00086">
    <property type="entry name" value="smpB"/>
    <property type="match status" value="1"/>
</dbReference>
<dbReference type="PANTHER" id="PTHR30308:SF2">
    <property type="entry name" value="SSRA-BINDING PROTEIN"/>
    <property type="match status" value="1"/>
</dbReference>
<dbReference type="PANTHER" id="PTHR30308">
    <property type="entry name" value="TMRNA-BINDING COMPONENT OF TRANS-TRANSLATION TAGGING COMPLEX"/>
    <property type="match status" value="1"/>
</dbReference>
<dbReference type="Pfam" id="PF01668">
    <property type="entry name" value="SmpB"/>
    <property type="match status" value="1"/>
</dbReference>
<dbReference type="SUPFAM" id="SSF74982">
    <property type="entry name" value="Small protein B (SmpB)"/>
    <property type="match status" value="1"/>
</dbReference>
<dbReference type="PROSITE" id="PS01317">
    <property type="entry name" value="SSRP"/>
    <property type="match status" value="1"/>
</dbReference>
<comment type="function">
    <text evidence="1">Required for rescue of stalled ribosomes mediated by trans-translation. Binds to transfer-messenger RNA (tmRNA), required for stable association of tmRNA with ribosomes. tmRNA and SmpB together mimic tRNA shape, replacing the anticodon stem-loop with SmpB. tmRNA is encoded by the ssrA gene; the 2 termini fold to resemble tRNA(Ala) and it encodes a 'tag peptide', a short internal open reading frame. During trans-translation Ala-aminoacylated tmRNA acts like a tRNA, entering the A-site of stalled ribosomes, displacing the stalled mRNA. The ribosome then switches to translate the ORF on the tmRNA; the nascent peptide is terminated with the 'tag peptide' encoded by the tmRNA and targeted for degradation. The ribosome is freed to recommence translation, which seems to be the essential function of trans-translation.</text>
</comment>
<comment type="subcellular location">
    <subcellularLocation>
        <location evidence="1">Cytoplasm</location>
    </subcellularLocation>
    <text evidence="1">The tmRNA-SmpB complex associates with stalled 70S ribosomes.</text>
</comment>
<comment type="similarity">
    <text evidence="1">Belongs to the SmpB family.</text>
</comment>